<name>NU1M_VARDU</name>
<evidence type="ECO:0000250" key="1"/>
<evidence type="ECO:0000255" key="2"/>
<evidence type="ECO:0000305" key="3"/>
<dbReference type="EC" id="7.1.1.2"/>
<dbReference type="EMBL" id="AF407494">
    <property type="protein sequence ID" value="AAL10035.1"/>
    <property type="molecule type" value="Genomic_DNA"/>
</dbReference>
<dbReference type="SMR" id="Q94YT7"/>
<dbReference type="GO" id="GO:0005743">
    <property type="term" value="C:mitochondrial inner membrane"/>
    <property type="evidence" value="ECO:0007669"/>
    <property type="project" value="UniProtKB-SubCell"/>
</dbReference>
<dbReference type="GO" id="GO:0008137">
    <property type="term" value="F:NADH dehydrogenase (ubiquinone) activity"/>
    <property type="evidence" value="ECO:0007669"/>
    <property type="project" value="UniProtKB-EC"/>
</dbReference>
<dbReference type="GO" id="GO:0009060">
    <property type="term" value="P:aerobic respiration"/>
    <property type="evidence" value="ECO:0007669"/>
    <property type="project" value="TreeGrafter"/>
</dbReference>
<dbReference type="HAMAP" id="MF_01350">
    <property type="entry name" value="NDH1_NuoH"/>
    <property type="match status" value="1"/>
</dbReference>
<dbReference type="InterPro" id="IPR001694">
    <property type="entry name" value="NADH_UbQ_OxRdtase_su1/FPO"/>
</dbReference>
<dbReference type="InterPro" id="IPR018086">
    <property type="entry name" value="NADH_UbQ_OxRdtase_su1_CS"/>
</dbReference>
<dbReference type="PANTHER" id="PTHR11432">
    <property type="entry name" value="NADH DEHYDROGENASE SUBUNIT 1"/>
    <property type="match status" value="1"/>
</dbReference>
<dbReference type="PANTHER" id="PTHR11432:SF3">
    <property type="entry name" value="NADH-UBIQUINONE OXIDOREDUCTASE CHAIN 1"/>
    <property type="match status" value="1"/>
</dbReference>
<dbReference type="Pfam" id="PF00146">
    <property type="entry name" value="NADHdh"/>
    <property type="match status" value="1"/>
</dbReference>
<dbReference type="PROSITE" id="PS00667">
    <property type="entry name" value="COMPLEX1_ND1_1"/>
    <property type="match status" value="1"/>
</dbReference>
<dbReference type="PROSITE" id="PS00668">
    <property type="entry name" value="COMPLEX1_ND1_2"/>
    <property type="match status" value="1"/>
</dbReference>
<accession>Q94YT7</accession>
<gene>
    <name type="primary">MT-ND1</name>
    <name type="synonym">MTND1</name>
    <name type="synonym">NADH1</name>
    <name type="synonym">ND1</name>
</gene>
<organism>
    <name type="scientific">Varanus dumerilii</name>
    <name type="common">Dumeril's monitor</name>
    <dbReference type="NCBI Taxonomy" id="169837"/>
    <lineage>
        <taxon>Eukaryota</taxon>
        <taxon>Metazoa</taxon>
        <taxon>Chordata</taxon>
        <taxon>Craniata</taxon>
        <taxon>Vertebrata</taxon>
        <taxon>Euteleostomi</taxon>
        <taxon>Lepidosauria</taxon>
        <taxon>Squamata</taxon>
        <taxon>Bifurcata</taxon>
        <taxon>Unidentata</taxon>
        <taxon>Episquamata</taxon>
        <taxon>Toxicofera</taxon>
        <taxon>Anguimorpha</taxon>
        <taxon>Paleoanguimorpha</taxon>
        <taxon>Varanoidea</taxon>
        <taxon>Varanidae</taxon>
        <taxon>Varanus</taxon>
    </lineage>
</organism>
<keyword id="KW-0249">Electron transport</keyword>
<keyword id="KW-0472">Membrane</keyword>
<keyword id="KW-0496">Mitochondrion</keyword>
<keyword id="KW-0999">Mitochondrion inner membrane</keyword>
<keyword id="KW-0520">NAD</keyword>
<keyword id="KW-0679">Respiratory chain</keyword>
<keyword id="KW-1278">Translocase</keyword>
<keyword id="KW-0812">Transmembrane</keyword>
<keyword id="KW-1133">Transmembrane helix</keyword>
<keyword id="KW-0813">Transport</keyword>
<keyword id="KW-0830">Ubiquinone</keyword>
<feature type="chain" id="PRO_0000117494" description="NADH-ubiquinone oxidoreductase chain 1">
    <location>
        <begin position="1"/>
        <end position="321"/>
    </location>
</feature>
<feature type="transmembrane region" description="Helical" evidence="2">
    <location>
        <begin position="7"/>
        <end position="27"/>
    </location>
</feature>
<feature type="transmembrane region" description="Helical" evidence="2">
    <location>
        <begin position="73"/>
        <end position="93"/>
    </location>
</feature>
<feature type="transmembrane region" description="Helical" evidence="2">
    <location>
        <begin position="104"/>
        <end position="124"/>
    </location>
</feature>
<feature type="transmembrane region" description="Helical" evidence="2">
    <location>
        <begin position="148"/>
        <end position="168"/>
    </location>
</feature>
<feature type="transmembrane region" description="Helical" evidence="2">
    <location>
        <begin position="175"/>
        <end position="195"/>
    </location>
</feature>
<feature type="transmembrane region" description="Helical" evidence="2">
    <location>
        <begin position="227"/>
        <end position="247"/>
    </location>
</feature>
<feature type="transmembrane region" description="Helical" evidence="2">
    <location>
        <begin position="256"/>
        <end position="276"/>
    </location>
</feature>
<feature type="transmembrane region" description="Helical" evidence="2">
    <location>
        <begin position="297"/>
        <end position="317"/>
    </location>
</feature>
<proteinExistence type="inferred from homology"/>
<comment type="function">
    <text evidence="1">Core subunit of the mitochondrial membrane respiratory chain NADH dehydrogenase (Complex I) that is believed to belong to the minimal assembly required for catalysis. Complex I functions in the transfer of electrons from NADH to the respiratory chain. The immediate electron acceptor for the enzyme is believed to be ubiquinone (By similarity).</text>
</comment>
<comment type="catalytic activity">
    <reaction>
        <text>a ubiquinone + NADH + 5 H(+)(in) = a ubiquinol + NAD(+) + 4 H(+)(out)</text>
        <dbReference type="Rhea" id="RHEA:29091"/>
        <dbReference type="Rhea" id="RHEA-COMP:9565"/>
        <dbReference type="Rhea" id="RHEA-COMP:9566"/>
        <dbReference type="ChEBI" id="CHEBI:15378"/>
        <dbReference type="ChEBI" id="CHEBI:16389"/>
        <dbReference type="ChEBI" id="CHEBI:17976"/>
        <dbReference type="ChEBI" id="CHEBI:57540"/>
        <dbReference type="ChEBI" id="CHEBI:57945"/>
        <dbReference type="EC" id="7.1.1.2"/>
    </reaction>
</comment>
<comment type="subcellular location">
    <subcellularLocation>
        <location evidence="1">Mitochondrion inner membrane</location>
        <topology evidence="1">Multi-pass membrane protein</topology>
    </subcellularLocation>
</comment>
<comment type="similarity">
    <text evidence="3">Belongs to the complex I subunit 1 family.</text>
</comment>
<sequence length="321" mass="35713">MPLTMTITNSLMYIIPILIAVAFLTLMERKMLGYMQLRKGPNITGPYGLLQPIADGLKLFTKEPIRPLNTSPILLILSPMLALTTALLIWTPIPMPHALTNLNLGLLSTLAISSMAVNSTLWAGWAPNSKYALIGSLRAVAQTISYEVTLGIILLSTLMLTGGFTMQLLTTTQKHTWLLTTSWPLAMMWFISTLAETNRAPFDLTEGESELVSGFNVEYAGGPFALFFLAEYTNIISMNLLTCILFINPGPTQHPELFLTNLIIKTMILSMSFLWIRASYPRFRYDQLMHLLWKQFLPLTMALCLLHTSLSISISGIPPLS</sequence>
<protein>
    <recommendedName>
        <fullName>NADH-ubiquinone oxidoreductase chain 1</fullName>
        <ecNumber>7.1.1.2</ecNumber>
    </recommendedName>
    <alternativeName>
        <fullName>NADH dehydrogenase subunit 1</fullName>
    </alternativeName>
</protein>
<reference key="1">
    <citation type="journal article" date="2001" name="Cladistics">
        <title>Mitochondrial DNA evidence and evolution in Varanoidea (Squamata).</title>
        <authorList>
            <person name="Ast J.C."/>
        </authorList>
    </citation>
    <scope>NUCLEOTIDE SEQUENCE [GENOMIC DNA]</scope>
    <source>
        <strain>Isolate UMFS 10375</strain>
    </source>
</reference>
<geneLocation type="mitochondrion"/>